<protein>
    <recommendedName>
        <fullName evidence="12">Temporin-1Tl</fullName>
        <shortName evidence="12">TL</shortName>
    </recommendedName>
    <alternativeName>
        <fullName evidence="11 14">Temporin-L</fullName>
    </alternativeName>
</protein>
<comment type="function">
    <text evidence="1 2 3 4 5 6 7 8 10 17">Amphipathic alpha-helical antimicrobial peptide with potent activity against both Gram-negative and Gram-positive bacteria, and against fungi (PubMed:12133008, PubMed:16867990, PubMed:18370376, PubMed:31358802, PubMed:9022710). Mainly acts by causing perturbation of bilayer integrity of both neutral and negatively charged membranes, probably by forming pore-like openings (PubMed:12133008, PubMed:31358802). Also displays anti-leishmania activity by damaging parasite membrane (By similarity). Shows hemolytic activity (PubMed:12133008). Also shows cytotoxicity against cancer cell lines (PubMed:12133008). Strongly binds to lipopolysaccharides (LPS) and its lipid A portion (Probable) (PubMed:16801429). Improves temporin-A and temporin-B activities by preventing their homo-oligomerization in LPS (PubMed:16867990, PubMed:21586570). In vivo, its simultaneous administration with beta-lactam antibiotics produces the highest antimicrobial activities and the strongest reduction in plasma LPS and TNF-alpha levels, resulting in the highest survival rates in rat models of septic shock (PubMed:16801429).</text>
</comment>
<comment type="subunit">
    <text evidence="7 16 17 18">Adopts monomeric helical conformations when bound to bacterial (anionic) and eukaryotic (zwitterionic) model membranes (Probable). May also oligomerize as homo-dimers or -trimers in Gram-negative bacteria mimetic membranes, and from homo-dimers to -pentamers in Gram-positive bacteria mimetic membranes (Probable). Adopts an antiparallel dimeric helical structure when complexed with LPS micelles (PubMed:21586570). This dimeric helical structure may interact with the lipid A domain of LPS (Probable).</text>
</comment>
<comment type="subcellular location">
    <subcellularLocation>
        <location evidence="9 10">Secreted</location>
    </subcellularLocation>
    <subcellularLocation>
        <location evidence="8">Target cell membrane</location>
    </subcellularLocation>
    <text evidence="8">Contact and insertion into membrane begin at the N-terminus.</text>
</comment>
<comment type="tissue specificity">
    <text evidence="19 20">Expressed by the skin glands.</text>
</comment>
<comment type="mass spectrometry"/>
<comment type="similarity">
    <text evidence="15">Belongs to the frog skin active peptide (FSAP) family. Temporin subfamily.</text>
</comment>
<comment type="online information" name="The antimicrobial peptide database">
    <link uri="https://wangapd3.com/database/query_output.php?ID=00101"/>
</comment>
<dbReference type="PDB" id="6GS5">
    <property type="method" value="NMR"/>
    <property type="chains" value="A=1-13"/>
</dbReference>
<dbReference type="PDB" id="7OS8">
    <property type="method" value="NMR"/>
    <property type="chains" value="A=1-13"/>
</dbReference>
<dbReference type="PDB" id="7OSD">
    <property type="method" value="NMR"/>
    <property type="chains" value="A=1-13"/>
</dbReference>
<dbReference type="PDB" id="8TV4">
    <property type="method" value="NMR"/>
    <property type="chains" value="A=1-13"/>
</dbReference>
<dbReference type="PDB" id="9BVS">
    <property type="method" value="NMR"/>
    <property type="chains" value="A=1-13"/>
</dbReference>
<dbReference type="PDB" id="9BVU">
    <property type="method" value="NMR"/>
    <property type="chains" value="A=1-13"/>
</dbReference>
<dbReference type="PDB" id="9BVV">
    <property type="method" value="NMR"/>
    <property type="chains" value="A=1-11"/>
</dbReference>
<dbReference type="PDBsum" id="6GS5"/>
<dbReference type="PDBsum" id="7OS8"/>
<dbReference type="PDBsum" id="7OSD"/>
<dbReference type="PDBsum" id="8TV4"/>
<dbReference type="PDBsum" id="9BVS"/>
<dbReference type="PDBsum" id="9BVU"/>
<dbReference type="PDBsum" id="9BVV"/>
<dbReference type="BMRB" id="P57104"/>
<dbReference type="SMR" id="P57104"/>
<dbReference type="GO" id="GO:0005576">
    <property type="term" value="C:extracellular region"/>
    <property type="evidence" value="ECO:0000314"/>
    <property type="project" value="UniProtKB"/>
</dbReference>
<dbReference type="GO" id="GO:0016020">
    <property type="term" value="C:membrane"/>
    <property type="evidence" value="ECO:0007669"/>
    <property type="project" value="UniProtKB-KW"/>
</dbReference>
<dbReference type="GO" id="GO:0044218">
    <property type="term" value="C:other organism cell membrane"/>
    <property type="evidence" value="ECO:0007669"/>
    <property type="project" value="UniProtKB-KW"/>
</dbReference>
<dbReference type="GO" id="GO:0008289">
    <property type="term" value="F:lipid binding"/>
    <property type="evidence" value="ECO:0000314"/>
    <property type="project" value="DisProt"/>
</dbReference>
<dbReference type="GO" id="GO:0042742">
    <property type="term" value="P:defense response to bacterium"/>
    <property type="evidence" value="ECO:0000269"/>
    <property type="project" value="DisProt"/>
</dbReference>
<dbReference type="GO" id="GO:0050832">
    <property type="term" value="P:defense response to fungus"/>
    <property type="evidence" value="ECO:0000269"/>
    <property type="project" value="DisProt"/>
</dbReference>
<dbReference type="GO" id="GO:0044179">
    <property type="term" value="P:hemolysis in another organism"/>
    <property type="evidence" value="ECO:0000269"/>
    <property type="project" value="DisProt"/>
</dbReference>
<dbReference type="GO" id="GO:0045087">
    <property type="term" value="P:innate immune response"/>
    <property type="evidence" value="ECO:0007669"/>
    <property type="project" value="UniProtKB-KW"/>
</dbReference>
<proteinExistence type="evidence at protein level"/>
<reference key="1">
    <citation type="journal article" date="1996" name="Eur. J. Biochem.">
        <title>Temporins, antimicrobial peptides from the European red frog Rana temporaria.</title>
        <authorList>
            <person name="Simmaco M."/>
            <person name="Mignogna G."/>
            <person name="Canofeni S."/>
            <person name="Miele R."/>
            <person name="Mangoni M.L."/>
            <person name="Barra D."/>
        </authorList>
    </citation>
    <scope>PROTEIN SEQUENCE</scope>
    <scope>AMIDATION AT LEU-13</scope>
    <scope>SUBCELLULAR LOCATION</scope>
    <source>
        <tissue>Skin secretion</tissue>
    </source>
</reference>
<reference key="2">
    <citation type="journal article" date="2021" name="Anal. Bioanal. Chem.">
        <title>Differentiation of Central Slovenian and Moscow populations of Rana temporaria frogs using peptide biomarkers of temporins family.</title>
        <authorList>
            <person name="Samgina T.Y."/>
            <person name="Vasileva I.D."/>
            <person name="Kovalev S.V."/>
            <person name="Trebse P."/>
            <person name="Torkar G."/>
            <person name="Surin A.K."/>
            <person name="Zubarev R.A."/>
            <person name="Lebedev A.T."/>
        </authorList>
    </citation>
    <scope>PROTEIN SEQUENCE</scope>
    <scope>IDENTIFICATION BY MASS SPECTROMETRY</scope>
    <scope>SUBCELLULAR LOCATION</scope>
    <scope>AMIDATION AT LEU-13</scope>
    <source>
        <tissue evidence="13">Skin secretion</tissue>
    </source>
</reference>
<reference key="3">
    <citation type="journal article" date="2002" name="Biochem. J.">
        <title>Temporin L: antimicrobial, haemolytic and cytotoxic activities, and effects on membrane permeabilization in lipid vesicles.</title>
        <authorList>
            <person name="Rinaldi A.C."/>
            <person name="Mangoni M.L."/>
            <person name="Rufo A."/>
            <person name="Luzi C."/>
            <person name="Barra D."/>
            <person name="Zhao H."/>
            <person name="Kinnunen P.K."/>
            <person name="Bozzi A."/>
            <person name="Di Giulio A."/>
            <person name="Simmaco M."/>
        </authorList>
    </citation>
    <scope>FUNCTION</scope>
</reference>
<reference key="4">
    <citation type="journal article" date="2006" name="Antimicrob. Agents Chemother.">
        <title>Interaction of antimicrobial peptide temporin L with lipopolysaccharide in vitro and in experimental rat models of septic shock caused by gram-negative bacteria.</title>
        <authorList>
            <person name="Giacometti A."/>
            <person name="Cirioni O."/>
            <person name="Ghiselli R."/>
            <person name="Mocchegiani F."/>
            <person name="Orlando F."/>
            <person name="Silvestri C."/>
            <person name="Bozzi A."/>
            <person name="Di Giulio A."/>
            <person name="Luzi C."/>
            <person name="Mangoni M.L."/>
            <person name="Barra D."/>
            <person name="Saba V."/>
            <person name="Scalise G."/>
            <person name="Rinaldi A.C."/>
        </authorList>
    </citation>
    <scope>FUNCTION</scope>
    <scope>BIOASSAY</scope>
</reference>
<reference key="5">
    <citation type="journal article" date="2006" name="J. Biol. Chem.">
        <title>A synergism between temporins toward Gram-negative bacteria overcomes resistance imposed by the lipopolysaccharide protective layer.</title>
        <authorList>
            <person name="Rosenfeld Y."/>
            <person name="Barra D."/>
            <person name="Simmaco M."/>
            <person name="Shai Y."/>
            <person name="Mangoni M.L."/>
        </authorList>
    </citation>
    <scope>FUNCTION</scope>
    <scope>SUBUNIT</scope>
</reference>
<reference key="6">
    <citation type="journal article" date="2015" name="Molecules">
        <title>The role of phosphoglycans in the susceptibility of Leishmania mexicana to the temporin family of anti-microbial peptides.</title>
        <authorList>
            <person name="Eggimann G.A."/>
            <person name="Sweeney K."/>
            <person name="Bolt H.L."/>
            <person name="Rozatian N."/>
            <person name="Cobb S.L."/>
            <person name="Denny P.W."/>
        </authorList>
    </citation>
    <scope>FUNCTION</scope>
</reference>
<reference key="7">
    <citation type="journal article" date="2008" name="J. Med. Chem.">
        <title>A different molecular mechanism underlying antimicrobial and hemolytic actions of temporins A and L.</title>
        <authorList>
            <person name="Carotenuto A."/>
            <person name="Malfi S."/>
            <person name="Saviello M.R."/>
            <person name="Campiglia P."/>
            <person name="Gomez-Monterrey I."/>
            <person name="Mangoni M.L."/>
            <person name="Gaddi L.M."/>
            <person name="Novellino E."/>
            <person name="Grieco P."/>
        </authorList>
    </citation>
    <scope>STRUCTURE BY NMR IN SDS AND DPC MICELLES</scope>
    <scope>FUNCTION</scope>
    <scope>MUTAGENESIS OF GLN-3</scope>
</reference>
<reference key="8">
    <citation type="journal article" date="2011" name="J. Biol. Chem.">
        <title>NMR structures and interactions of temporin-1Tl and temporin-1Tb with lipopolysaccharide micelles: mechanistic insights into outer membrane permeabilization and synergistic activity.</title>
        <authorList>
            <person name="Bhunia A."/>
            <person name="Saravanan R."/>
            <person name="Mohanram H."/>
            <person name="Mangoni M.L."/>
            <person name="Bhattacharjya S."/>
        </authorList>
    </citation>
    <scope>STRUCTURE BY NMR IN COMPLEX WITH TEMPORIN-1TL IN LPS MICELLES</scope>
    <scope>FUNCTION</scope>
    <scope>SUBUNIT</scope>
</reference>
<reference key="9">
    <citation type="journal article" date="2019" name="Sci. Rep.">
        <title>Temporin L and aurein 2.5 have identical conformations but subtly distinct membrane and antibacterial activities.</title>
        <authorList>
            <person name="Manzo G."/>
            <person name="Ferguson P.M."/>
            <person name="Hind C.K."/>
            <person name="Clifford M."/>
            <person name="Gustilo V.B."/>
            <person name="Ali H."/>
            <person name="Bansal S.S."/>
            <person name="Bui T.T."/>
            <person name="Drake A.F."/>
            <person name="Atkinson R.A."/>
            <person name="Sutton J.M."/>
            <person name="Lorenz C.D."/>
            <person name="Phoenix D.A."/>
            <person name="Mason A.J."/>
        </authorList>
    </citation>
    <scope>STRUCTURE BY NMR IN SDS MICELLES</scope>
    <scope>3D-STRUCTURE MODELING IN BACTERIAL MIMETIC MEMBRANES</scope>
    <scope>FUNCTION</scope>
</reference>
<organism>
    <name type="scientific">Rana temporaria</name>
    <name type="common">European common frog</name>
    <dbReference type="NCBI Taxonomy" id="8407"/>
    <lineage>
        <taxon>Eukaryota</taxon>
        <taxon>Metazoa</taxon>
        <taxon>Chordata</taxon>
        <taxon>Craniata</taxon>
        <taxon>Vertebrata</taxon>
        <taxon>Euteleostomi</taxon>
        <taxon>Amphibia</taxon>
        <taxon>Batrachia</taxon>
        <taxon>Anura</taxon>
        <taxon>Neobatrachia</taxon>
        <taxon>Ranoidea</taxon>
        <taxon>Ranidae</taxon>
        <taxon>Rana</taxon>
        <taxon>Rana</taxon>
    </lineage>
</organism>
<keyword id="KW-0002">3D-structure</keyword>
<keyword id="KW-0027">Amidation</keyword>
<keyword id="KW-0878">Amphibian defense peptide</keyword>
<keyword id="KW-0044">Antibiotic</keyword>
<keyword id="KW-0929">Antimicrobial</keyword>
<keyword id="KW-0204">Cytolysis</keyword>
<keyword id="KW-0903">Direct protein sequencing</keyword>
<keyword id="KW-0354">Hemolysis</keyword>
<keyword id="KW-0391">Immunity</keyword>
<keyword id="KW-0399">Innate immunity</keyword>
<keyword id="KW-0446">Lipid-binding</keyword>
<keyword id="KW-0472">Membrane</keyword>
<keyword id="KW-0964">Secreted</keyword>
<keyword id="KW-1052">Target cell membrane</keyword>
<keyword id="KW-1053">Target membrane</keyword>
<name>TPL_RANTE</name>
<evidence type="ECO:0000250" key="1">
    <source>
        <dbReference type="UniProtKB" id="P56917"/>
    </source>
</evidence>
<evidence type="ECO:0000250" key="2">
    <source>
        <dbReference type="UniProtKB" id="P79874"/>
    </source>
</evidence>
<evidence type="ECO:0000269" key="3">
    <source>
    </source>
</evidence>
<evidence type="ECO:0000269" key="4">
    <source>
    </source>
</evidence>
<evidence type="ECO:0000269" key="5">
    <source>
    </source>
</evidence>
<evidence type="ECO:0000269" key="6">
    <source>
    </source>
</evidence>
<evidence type="ECO:0000269" key="7">
    <source>
    </source>
</evidence>
<evidence type="ECO:0000269" key="8">
    <source>
    </source>
</evidence>
<evidence type="ECO:0000269" key="9">
    <source>
    </source>
</evidence>
<evidence type="ECO:0000269" key="10">
    <source>
    </source>
</evidence>
<evidence type="ECO:0000303" key="11">
    <source>
    </source>
</evidence>
<evidence type="ECO:0000303" key="12">
    <source>
    </source>
</evidence>
<evidence type="ECO:0000303" key="13">
    <source>
    </source>
</evidence>
<evidence type="ECO:0000303" key="14">
    <source>
    </source>
</evidence>
<evidence type="ECO:0000305" key="15"/>
<evidence type="ECO:0000305" key="16">
    <source>
    </source>
</evidence>
<evidence type="ECO:0000305" key="17">
    <source>
    </source>
</evidence>
<evidence type="ECO:0000305" key="18">
    <source>
    </source>
</evidence>
<evidence type="ECO:0000305" key="19">
    <source>
    </source>
</evidence>
<evidence type="ECO:0000305" key="20">
    <source>
    </source>
</evidence>
<evidence type="ECO:0007829" key="21">
    <source>
        <dbReference type="PDB" id="6GS5"/>
    </source>
</evidence>
<accession>P57104</accession>
<sequence>FVQWFSKFLGRIL</sequence>
<feature type="peptide" id="PRO_0000043585" description="Temporin-1Tl" evidence="10">
    <location>
        <begin position="1"/>
        <end position="13"/>
    </location>
</feature>
<feature type="modified residue" description="Leucine amide" evidence="10">
    <location>
        <position position="13"/>
    </location>
</feature>
<feature type="mutagenesis site" description="No change in activity against Gram-positive bacteria, weak increase in activity against Gram-negative bacteria and fungi, and 2-fold decrease in hemolytic activity." evidence="6">
    <original>Q</original>
    <variation>P</variation>
    <location>
        <position position="3"/>
    </location>
</feature>
<feature type="helix" evidence="21">
    <location>
        <begin position="4"/>
        <end position="8"/>
    </location>
</feature>
<feature type="turn" evidence="21">
    <location>
        <begin position="9"/>
        <end position="12"/>
    </location>
</feature>